<gene>
    <name evidence="1" type="primary">rplW</name>
    <name type="ordered locus">BLD_1709</name>
</gene>
<name>RL23_BIFLD</name>
<accession>B3DQ15</accession>
<feature type="chain" id="PRO_1000144533" description="Large ribosomal subunit protein uL23">
    <location>
        <begin position="1"/>
        <end position="98"/>
    </location>
</feature>
<evidence type="ECO:0000255" key="1">
    <source>
        <dbReference type="HAMAP-Rule" id="MF_01369"/>
    </source>
</evidence>
<evidence type="ECO:0000305" key="2"/>
<protein>
    <recommendedName>
        <fullName evidence="1">Large ribosomal subunit protein uL23</fullName>
    </recommendedName>
    <alternativeName>
        <fullName evidence="2">50S ribosomal protein L23</fullName>
    </alternativeName>
</protein>
<dbReference type="EMBL" id="CP000605">
    <property type="protein sequence ID" value="ACD99154.1"/>
    <property type="molecule type" value="Genomic_DNA"/>
</dbReference>
<dbReference type="RefSeq" id="WP_007053033.1">
    <property type="nucleotide sequence ID" value="NZ_AABM02000025.1"/>
</dbReference>
<dbReference type="SMR" id="B3DQ15"/>
<dbReference type="GeneID" id="85165059"/>
<dbReference type="KEGG" id="blj:BLD_1709"/>
<dbReference type="HOGENOM" id="CLU_037562_3_2_11"/>
<dbReference type="Proteomes" id="UP000002419">
    <property type="component" value="Chromosome"/>
</dbReference>
<dbReference type="GO" id="GO:1990904">
    <property type="term" value="C:ribonucleoprotein complex"/>
    <property type="evidence" value="ECO:0007669"/>
    <property type="project" value="UniProtKB-KW"/>
</dbReference>
<dbReference type="GO" id="GO:0005840">
    <property type="term" value="C:ribosome"/>
    <property type="evidence" value="ECO:0007669"/>
    <property type="project" value="UniProtKB-KW"/>
</dbReference>
<dbReference type="GO" id="GO:0019843">
    <property type="term" value="F:rRNA binding"/>
    <property type="evidence" value="ECO:0007669"/>
    <property type="project" value="UniProtKB-UniRule"/>
</dbReference>
<dbReference type="GO" id="GO:0003735">
    <property type="term" value="F:structural constituent of ribosome"/>
    <property type="evidence" value="ECO:0007669"/>
    <property type="project" value="InterPro"/>
</dbReference>
<dbReference type="GO" id="GO:0006412">
    <property type="term" value="P:translation"/>
    <property type="evidence" value="ECO:0007669"/>
    <property type="project" value="UniProtKB-UniRule"/>
</dbReference>
<dbReference type="FunFam" id="3.30.70.330:FF:000001">
    <property type="entry name" value="50S ribosomal protein L23"/>
    <property type="match status" value="1"/>
</dbReference>
<dbReference type="Gene3D" id="3.30.70.330">
    <property type="match status" value="1"/>
</dbReference>
<dbReference type="HAMAP" id="MF_01369_B">
    <property type="entry name" value="Ribosomal_uL23_B"/>
    <property type="match status" value="1"/>
</dbReference>
<dbReference type="InterPro" id="IPR012677">
    <property type="entry name" value="Nucleotide-bd_a/b_plait_sf"/>
</dbReference>
<dbReference type="InterPro" id="IPR013025">
    <property type="entry name" value="Ribosomal_uL23-like"/>
</dbReference>
<dbReference type="InterPro" id="IPR012678">
    <property type="entry name" value="Ribosomal_uL23/eL15/eS24_sf"/>
</dbReference>
<dbReference type="NCBIfam" id="NF004359">
    <property type="entry name" value="PRK05738.1-3"/>
    <property type="match status" value="1"/>
</dbReference>
<dbReference type="NCBIfam" id="NF004363">
    <property type="entry name" value="PRK05738.2-4"/>
    <property type="match status" value="1"/>
</dbReference>
<dbReference type="NCBIfam" id="NF004364">
    <property type="entry name" value="PRK05738.2-5"/>
    <property type="match status" value="1"/>
</dbReference>
<dbReference type="PANTHER" id="PTHR11620">
    <property type="entry name" value="60S RIBOSOMAL PROTEIN L23A"/>
    <property type="match status" value="1"/>
</dbReference>
<dbReference type="Pfam" id="PF00276">
    <property type="entry name" value="Ribosomal_L23"/>
    <property type="match status" value="1"/>
</dbReference>
<dbReference type="SUPFAM" id="SSF54189">
    <property type="entry name" value="Ribosomal proteins S24e, L23 and L15e"/>
    <property type="match status" value="1"/>
</dbReference>
<reference key="1">
    <citation type="journal article" date="2008" name="BMC Genomics">
        <title>Comparative genomic analysis of the gut bacterium Bifidobacterium longum reveals loci susceptible to deletion during pure culture growth.</title>
        <authorList>
            <person name="Lee J.H."/>
            <person name="Karamychev V.N."/>
            <person name="Kozyavkin S.A."/>
            <person name="Mills D."/>
            <person name="Pavlov A.R."/>
            <person name="Pavlova N.V."/>
            <person name="Polouchine N.N."/>
            <person name="Richardson P.M."/>
            <person name="Shakhova V.V."/>
            <person name="Slesarev A.I."/>
            <person name="Weimer B."/>
            <person name="O'Sullivan D.J."/>
        </authorList>
    </citation>
    <scope>NUCLEOTIDE SEQUENCE [LARGE SCALE GENOMIC DNA]</scope>
    <source>
        <strain>DJO10A</strain>
    </source>
</reference>
<keyword id="KW-0687">Ribonucleoprotein</keyword>
<keyword id="KW-0689">Ribosomal protein</keyword>
<keyword id="KW-0694">RNA-binding</keyword>
<keyword id="KW-0699">rRNA-binding</keyword>
<proteinExistence type="inferred from homology"/>
<comment type="function">
    <text evidence="1">One of the early assembly proteins it binds 23S rRNA. One of the proteins that surrounds the polypeptide exit tunnel on the outside of the ribosome. Forms the main docking site for trigger factor binding to the ribosome.</text>
</comment>
<comment type="subunit">
    <text evidence="1">Part of the 50S ribosomal subunit. Contacts protein L29, and trigger factor when it is bound to the ribosome.</text>
</comment>
<comment type="similarity">
    <text evidence="1">Belongs to the universal ribosomal protein uL23 family.</text>
</comment>
<organism>
    <name type="scientific">Bifidobacterium longum (strain DJO10A)</name>
    <dbReference type="NCBI Taxonomy" id="205913"/>
    <lineage>
        <taxon>Bacteria</taxon>
        <taxon>Bacillati</taxon>
        <taxon>Actinomycetota</taxon>
        <taxon>Actinomycetes</taxon>
        <taxon>Bifidobacteriales</taxon>
        <taxon>Bifidobacteriaceae</taxon>
        <taxon>Bifidobacterium</taxon>
    </lineage>
</organism>
<sequence length="98" mass="10794">MVAIHKPAHDVILKPVVSEKSYAASDRGQYTFVVAPDANKVQIKQAIEEIFKVKVTNVNTLNRAGKKQRTRTGFGQRASQKRAIVTVAEGQTIDIFGN</sequence>